<name>ATP8_EREGS</name>
<gene>
    <name type="primary">ATP8</name>
    <name type="ordered locus">AMI005W</name>
    <name type="ORF">AgATP8</name>
</gene>
<protein>
    <recommendedName>
        <fullName>ATP synthase protein 8</fullName>
    </recommendedName>
    <alternativeName>
        <fullName>F-ATPase subunit 8</fullName>
    </alternativeName>
</protein>
<geneLocation type="mitochondrion"/>
<proteinExistence type="inferred from homology"/>
<evidence type="ECO:0000250" key="1"/>
<evidence type="ECO:0000255" key="2"/>
<evidence type="ECO:0000305" key="3"/>
<sequence>MPQMIPFFFMNQLTYGFTFILTILFLTSYVFLPMILRLYISRLYISKL</sequence>
<dbReference type="EMBL" id="AE016821">
    <property type="protein sequence ID" value="AAS50172.1"/>
    <property type="molecule type" value="Genomic_DNA"/>
</dbReference>
<dbReference type="RefSeq" id="NP_987082.1">
    <property type="nucleotide sequence ID" value="NC_005789.1"/>
</dbReference>
<dbReference type="SMR" id="Q75G40"/>
<dbReference type="FunCoup" id="Q75G40">
    <property type="interactions" value="110"/>
</dbReference>
<dbReference type="STRING" id="284811.Q75G40"/>
<dbReference type="EnsemblFungi" id="AAS50172">
    <property type="protein sequence ID" value="AAS50172"/>
    <property type="gene ID" value="AGOS_AMI005W"/>
</dbReference>
<dbReference type="GeneID" id="2760772"/>
<dbReference type="KEGG" id="ago:AGOS_AMI005W"/>
<dbReference type="eggNOG" id="ENOG502RM7C">
    <property type="taxonomic scope" value="Eukaryota"/>
</dbReference>
<dbReference type="HOGENOM" id="CLU_214588_0_0_1"/>
<dbReference type="InParanoid" id="Q75G40"/>
<dbReference type="OrthoDB" id="3916939at2759"/>
<dbReference type="Proteomes" id="UP000000591">
    <property type="component" value="Mitochondrion"/>
</dbReference>
<dbReference type="GO" id="GO:0005743">
    <property type="term" value="C:mitochondrial inner membrane"/>
    <property type="evidence" value="ECO:0007669"/>
    <property type="project" value="EnsemblFungi"/>
</dbReference>
<dbReference type="GO" id="GO:0045259">
    <property type="term" value="C:proton-transporting ATP synthase complex"/>
    <property type="evidence" value="ECO:0007669"/>
    <property type="project" value="UniProtKB-KW"/>
</dbReference>
<dbReference type="GO" id="GO:0046933">
    <property type="term" value="F:proton-transporting ATP synthase activity, rotational mechanism"/>
    <property type="evidence" value="ECO:0007669"/>
    <property type="project" value="EnsemblFungi"/>
</dbReference>
<dbReference type="GO" id="GO:0015986">
    <property type="term" value="P:proton motive force-driven ATP synthesis"/>
    <property type="evidence" value="ECO:0000318"/>
    <property type="project" value="GO_Central"/>
</dbReference>
<dbReference type="InterPro" id="IPR009230">
    <property type="entry name" value="ATP_synth_su8_fun"/>
</dbReference>
<dbReference type="PANTHER" id="PTHR36101">
    <property type="entry name" value="ATP SYNTHASE PROTEIN 8"/>
    <property type="match status" value="1"/>
</dbReference>
<dbReference type="PANTHER" id="PTHR36101:SF1">
    <property type="entry name" value="ATP SYNTHASE PROTEIN 8"/>
    <property type="match status" value="1"/>
</dbReference>
<dbReference type="Pfam" id="PF05933">
    <property type="entry name" value="Fun_ATP-synt_8"/>
    <property type="match status" value="1"/>
</dbReference>
<accession>Q75G40</accession>
<feature type="chain" id="PRO_0000195595" description="ATP synthase protein 8">
    <location>
        <begin position="1"/>
        <end position="48"/>
    </location>
</feature>
<feature type="transmembrane region" description="Helical" evidence="2">
    <location>
        <begin position="13"/>
        <end position="35"/>
    </location>
</feature>
<keyword id="KW-0066">ATP synthesis</keyword>
<keyword id="KW-0138">CF(0)</keyword>
<keyword id="KW-0375">Hydrogen ion transport</keyword>
<keyword id="KW-0406">Ion transport</keyword>
<keyword id="KW-0472">Membrane</keyword>
<keyword id="KW-0496">Mitochondrion</keyword>
<keyword id="KW-1185">Reference proteome</keyword>
<keyword id="KW-0812">Transmembrane</keyword>
<keyword id="KW-1133">Transmembrane helix</keyword>
<keyword id="KW-0813">Transport</keyword>
<comment type="function">
    <text evidence="1">Mitochondrial membrane ATP synthase (F(1)F(0) ATP synthase or Complex V) produces ATP from ADP in the presence of a proton gradient across the membrane which is generated by electron transport complexes of the respiratory chain. F-type ATPases consist of two structural domains, F(1) - containing the extramembraneous catalytic core and F(0) - containing the membrane proton channel, linked together by a central stalk and a peripheral stalk. During catalysis, ATP synthesis in the catalytic domain of F(1) is coupled via a rotary mechanism of the central stalk subunits to proton translocation. Part of the complex F(0) domain. Minor subunit located with subunit a in the membrane (By similarity).</text>
</comment>
<comment type="subunit">
    <text>F-type ATPases have 2 components, CF(1) - the catalytic core - and CF(0) - the membrane proton channel. In yeast, the dimeric form of ATP synthase consists of 18 polypeptides: alpha, beta, gamma, delta, epsilon, 4 (B), 5 (OSCP), 6 (A), 8, 9 (C), d, E (Tim11), f, g, h, i, j and k.</text>
</comment>
<comment type="subcellular location">
    <subcellularLocation>
        <location>Mitochondrion membrane</location>
        <topology>Single-pass membrane protein</topology>
    </subcellularLocation>
</comment>
<comment type="similarity">
    <text evidence="3">Belongs to the ATPase protein 8 family.</text>
</comment>
<organism>
    <name type="scientific">Eremothecium gossypii (strain ATCC 10895 / CBS 109.51 / FGSC 9923 / NRRL Y-1056)</name>
    <name type="common">Yeast</name>
    <name type="synonym">Ashbya gossypii</name>
    <dbReference type="NCBI Taxonomy" id="284811"/>
    <lineage>
        <taxon>Eukaryota</taxon>
        <taxon>Fungi</taxon>
        <taxon>Dikarya</taxon>
        <taxon>Ascomycota</taxon>
        <taxon>Saccharomycotina</taxon>
        <taxon>Saccharomycetes</taxon>
        <taxon>Saccharomycetales</taxon>
        <taxon>Saccharomycetaceae</taxon>
        <taxon>Eremothecium</taxon>
    </lineage>
</organism>
<reference key="1">
    <citation type="journal article" date="2004" name="Science">
        <title>The Ashbya gossypii genome as a tool for mapping the ancient Saccharomyces cerevisiae genome.</title>
        <authorList>
            <person name="Dietrich F.S."/>
            <person name="Voegeli S."/>
            <person name="Brachat S."/>
            <person name="Lerch A."/>
            <person name="Gates K."/>
            <person name="Steiner S."/>
            <person name="Mohr C."/>
            <person name="Poehlmann R."/>
            <person name="Luedi P."/>
            <person name="Choi S."/>
            <person name="Wing R.A."/>
            <person name="Flavier A."/>
            <person name="Gaffney T.D."/>
            <person name="Philippsen P."/>
        </authorList>
    </citation>
    <scope>NUCLEOTIDE SEQUENCE [LARGE SCALE GENOMIC DNA]</scope>
    <source>
        <strain>ATCC 10895 / CBS 109.51 / FGSC 9923 / NRRL Y-1056</strain>
    </source>
</reference>
<reference key="2">
    <citation type="journal article" date="2013" name="G3 (Bethesda)">
        <title>Genomes of Ashbya fungi isolated from insects reveal four mating-type loci, numerous translocations, lack of transposons, and distinct gene duplications.</title>
        <authorList>
            <person name="Dietrich F.S."/>
            <person name="Voegeli S."/>
            <person name="Kuo S."/>
            <person name="Philippsen P."/>
        </authorList>
    </citation>
    <scope>GENOME REANNOTATION</scope>
    <source>
        <strain>ATCC 10895 / CBS 109.51 / FGSC 9923 / NRRL Y-1056</strain>
    </source>
</reference>